<dbReference type="EMBL" id="CP001083">
    <property type="protein sequence ID" value="ACQ53089.1"/>
    <property type="molecule type" value="Genomic_DNA"/>
</dbReference>
<dbReference type="RefSeq" id="WP_003357668.1">
    <property type="nucleotide sequence ID" value="NC_012658.1"/>
</dbReference>
<dbReference type="SMR" id="C3KU86"/>
<dbReference type="KEGG" id="cbi:CLJ_B3513"/>
<dbReference type="HOGENOM" id="CLU_128576_0_0_9"/>
<dbReference type="Proteomes" id="UP000002333">
    <property type="component" value="Chromosome"/>
</dbReference>
<dbReference type="GO" id="GO:0009347">
    <property type="term" value="C:aspartate carbamoyltransferase complex"/>
    <property type="evidence" value="ECO:0007669"/>
    <property type="project" value="InterPro"/>
</dbReference>
<dbReference type="GO" id="GO:0046872">
    <property type="term" value="F:metal ion binding"/>
    <property type="evidence" value="ECO:0007669"/>
    <property type="project" value="UniProtKB-KW"/>
</dbReference>
<dbReference type="GO" id="GO:0006207">
    <property type="term" value="P:'de novo' pyrimidine nucleobase biosynthetic process"/>
    <property type="evidence" value="ECO:0007669"/>
    <property type="project" value="InterPro"/>
</dbReference>
<dbReference type="GO" id="GO:0006221">
    <property type="term" value="P:pyrimidine nucleotide biosynthetic process"/>
    <property type="evidence" value="ECO:0007669"/>
    <property type="project" value="UniProtKB-UniRule"/>
</dbReference>
<dbReference type="Gene3D" id="2.30.30.20">
    <property type="entry name" value="Aspartate carbamoyltransferase regulatory subunit, C-terminal domain"/>
    <property type="match status" value="1"/>
</dbReference>
<dbReference type="Gene3D" id="3.30.70.140">
    <property type="entry name" value="Aspartate carbamoyltransferase regulatory subunit, N-terminal domain"/>
    <property type="match status" value="1"/>
</dbReference>
<dbReference type="HAMAP" id="MF_00002">
    <property type="entry name" value="Asp_carb_tr_reg"/>
    <property type="match status" value="1"/>
</dbReference>
<dbReference type="InterPro" id="IPR020545">
    <property type="entry name" value="Asp_carbamoyltransf_reg_N"/>
</dbReference>
<dbReference type="InterPro" id="IPR002801">
    <property type="entry name" value="Asp_carbamoylTrfase_reg"/>
</dbReference>
<dbReference type="InterPro" id="IPR020542">
    <property type="entry name" value="Asp_carbamoyltrfase_reg_C"/>
</dbReference>
<dbReference type="InterPro" id="IPR036792">
    <property type="entry name" value="Asp_carbatrfase_reg_C_sf"/>
</dbReference>
<dbReference type="InterPro" id="IPR036793">
    <property type="entry name" value="Asp_carbatrfase_reg_N_sf"/>
</dbReference>
<dbReference type="NCBIfam" id="NF002063">
    <property type="entry name" value="PRK00893.1-3"/>
    <property type="match status" value="1"/>
</dbReference>
<dbReference type="PANTHER" id="PTHR35805">
    <property type="entry name" value="ASPARTATE CARBAMOYLTRANSFERASE REGULATORY CHAIN"/>
    <property type="match status" value="1"/>
</dbReference>
<dbReference type="PANTHER" id="PTHR35805:SF1">
    <property type="entry name" value="ASPARTATE CARBAMOYLTRANSFERASE REGULATORY CHAIN"/>
    <property type="match status" value="1"/>
</dbReference>
<dbReference type="Pfam" id="PF01948">
    <property type="entry name" value="PyrI"/>
    <property type="match status" value="1"/>
</dbReference>
<dbReference type="Pfam" id="PF02748">
    <property type="entry name" value="PyrI_C"/>
    <property type="match status" value="1"/>
</dbReference>
<dbReference type="SUPFAM" id="SSF57825">
    <property type="entry name" value="Aspartate carbamoyltransferase, Regulatory-chain, C-terminal domain"/>
    <property type="match status" value="1"/>
</dbReference>
<dbReference type="SUPFAM" id="SSF54893">
    <property type="entry name" value="Aspartate carbamoyltransferase, Regulatory-chain, N-terminal domain"/>
    <property type="match status" value="1"/>
</dbReference>
<gene>
    <name evidence="1" type="primary">pyrI</name>
    <name type="ordered locus">CLJ_B3513</name>
</gene>
<keyword id="KW-0479">Metal-binding</keyword>
<keyword id="KW-0665">Pyrimidine biosynthesis</keyword>
<keyword id="KW-0862">Zinc</keyword>
<organism>
    <name type="scientific">Clostridium botulinum (strain 657 / Type Ba4)</name>
    <dbReference type="NCBI Taxonomy" id="515621"/>
    <lineage>
        <taxon>Bacteria</taxon>
        <taxon>Bacillati</taxon>
        <taxon>Bacillota</taxon>
        <taxon>Clostridia</taxon>
        <taxon>Eubacteriales</taxon>
        <taxon>Clostridiaceae</taxon>
        <taxon>Clostridium</taxon>
    </lineage>
</organism>
<comment type="function">
    <text evidence="1">Involved in allosteric regulation of aspartate carbamoyltransferase.</text>
</comment>
<comment type="cofactor">
    <cofactor evidence="1">
        <name>Zn(2+)</name>
        <dbReference type="ChEBI" id="CHEBI:29105"/>
    </cofactor>
    <text evidence="1">Binds 1 zinc ion per subunit.</text>
</comment>
<comment type="subunit">
    <text evidence="1">Contains catalytic and regulatory chains.</text>
</comment>
<comment type="similarity">
    <text evidence="1">Belongs to the PyrI family.</text>
</comment>
<evidence type="ECO:0000255" key="1">
    <source>
        <dbReference type="HAMAP-Rule" id="MF_00002"/>
    </source>
</evidence>
<name>PYRI_CLOB6</name>
<protein>
    <recommendedName>
        <fullName evidence="1">Aspartate carbamoyltransferase regulatory chain</fullName>
    </recommendedName>
</protein>
<proteinExistence type="inferred from homology"/>
<sequence length="146" mass="16746">MLTINSIKNGIVIDHIQAGHGIKIFKYLGLEEADYRVALIMNAESSKLGKKDIIKIENIMEIDYKVLGFIDPTITIDVIENETIKEKIKLELPKTIENVIKCKNPRCITSIENYIPNEFYLVDEENGEYRCKYCDEIYSGGDINKL</sequence>
<accession>C3KU86</accession>
<feature type="chain" id="PRO_1000201610" description="Aspartate carbamoyltransferase regulatory chain">
    <location>
        <begin position="1"/>
        <end position="146"/>
    </location>
</feature>
<feature type="binding site" evidence="1">
    <location>
        <position position="102"/>
    </location>
    <ligand>
        <name>Zn(2+)</name>
        <dbReference type="ChEBI" id="CHEBI:29105"/>
    </ligand>
</feature>
<feature type="binding site" evidence="1">
    <location>
        <position position="107"/>
    </location>
    <ligand>
        <name>Zn(2+)</name>
        <dbReference type="ChEBI" id="CHEBI:29105"/>
    </ligand>
</feature>
<feature type="binding site" evidence="1">
    <location>
        <position position="131"/>
    </location>
    <ligand>
        <name>Zn(2+)</name>
        <dbReference type="ChEBI" id="CHEBI:29105"/>
    </ligand>
</feature>
<feature type="binding site" evidence="1">
    <location>
        <position position="134"/>
    </location>
    <ligand>
        <name>Zn(2+)</name>
        <dbReference type="ChEBI" id="CHEBI:29105"/>
    </ligand>
</feature>
<reference key="1">
    <citation type="submission" date="2008-05" db="EMBL/GenBank/DDBJ databases">
        <title>Genome sequence of Clostridium botulinum Ba4 strain 657.</title>
        <authorList>
            <person name="Shrivastava S."/>
            <person name="Brown J.L."/>
            <person name="Bruce D."/>
            <person name="Detter C."/>
            <person name="Munk C."/>
            <person name="Smith L.A."/>
            <person name="Smith T.J."/>
            <person name="Sutton G."/>
            <person name="Brettin T.S."/>
        </authorList>
    </citation>
    <scope>NUCLEOTIDE SEQUENCE [LARGE SCALE GENOMIC DNA]</scope>
    <source>
        <strain>657 / Type Ba4</strain>
    </source>
</reference>